<gene>
    <name type="primary">RCL1</name>
    <name type="synonym">RTC1</name>
    <name type="ordered locus">YOL010W</name>
</gene>
<keyword id="KW-0002">3D-structure</keyword>
<keyword id="KW-0007">Acetylation</keyword>
<keyword id="KW-0539">Nucleus</keyword>
<keyword id="KW-1185">Reference proteome</keyword>
<keyword id="KW-0690">Ribosome biogenesis</keyword>
<sequence>MSSSAPKYTTFQGSQNFRLRIVLATLSGKPIKIEKIRSGDLNPGLKDYEVSFLRLIESVTNGSVIEISYTGTTVIYRPGIIVGGASTHICPSSKPVGYFVEPMLYLAPFSKKKFSILFKGITASHNDAGIEAIKWGLMPVMEKFGVRECALHTLKRGSPPLGGGEVHLVVDSLIAQPITMHEIDRPIISSITGVAYSTRVSPSLVNRMIDGAKKVLKNLQCEVNITADVWRGENSGKSPGWGITLVAQSKQKGWSYFAEDIGDAGSIPEELGEKVACQLLEEISKSAAVGRNQLPLAIVYMVIGKEDIGRLRINKEQIDERFIILLRDIKKIFNTEVFLKPVDEADNEDMIATIKGIGFTNTSKKIA</sequence>
<dbReference type="EMBL" id="Z74752">
    <property type="protein sequence ID" value="CAA99009.1"/>
    <property type="molecule type" value="Genomic_DNA"/>
</dbReference>
<dbReference type="EMBL" id="BK006948">
    <property type="protein sequence ID" value="DAA10773.1"/>
    <property type="molecule type" value="Genomic_DNA"/>
</dbReference>
<dbReference type="PIR" id="S66692">
    <property type="entry name" value="S66692"/>
</dbReference>
<dbReference type="RefSeq" id="NP_014633.1">
    <property type="nucleotide sequence ID" value="NM_001183264.1"/>
</dbReference>
<dbReference type="PDB" id="4CLQ">
    <property type="method" value="X-ray"/>
    <property type="resolution" value="2.02 A"/>
    <property type="chains" value="A=1-367"/>
</dbReference>
<dbReference type="PDB" id="5JPQ">
    <property type="method" value="EM"/>
    <property type="resolution" value="7.30 A"/>
    <property type="chains" value="Z=1-367"/>
</dbReference>
<dbReference type="PDB" id="5TZS">
    <property type="method" value="EM"/>
    <property type="resolution" value="5.10 A"/>
    <property type="chains" value="h=1-367"/>
</dbReference>
<dbReference type="PDB" id="5WLC">
    <property type="method" value="EM"/>
    <property type="resolution" value="3.80 A"/>
    <property type="chains" value="SH=1-367"/>
</dbReference>
<dbReference type="PDB" id="5WYJ">
    <property type="method" value="EM"/>
    <property type="resolution" value="8.70 A"/>
    <property type="chains" value="R1=1-367"/>
</dbReference>
<dbReference type="PDB" id="5WYK">
    <property type="method" value="EM"/>
    <property type="resolution" value="4.50 A"/>
    <property type="chains" value="R1=1-367"/>
</dbReference>
<dbReference type="PDB" id="6KE6">
    <property type="method" value="EM"/>
    <property type="resolution" value="3.40 A"/>
    <property type="chains" value="RK=1-367"/>
</dbReference>
<dbReference type="PDB" id="6LQP">
    <property type="method" value="EM"/>
    <property type="resolution" value="3.20 A"/>
    <property type="chains" value="RK=1-367"/>
</dbReference>
<dbReference type="PDB" id="6LQQ">
    <property type="method" value="EM"/>
    <property type="resolution" value="4.10 A"/>
    <property type="chains" value="RK=1-367"/>
</dbReference>
<dbReference type="PDB" id="6LQR">
    <property type="method" value="EM"/>
    <property type="resolution" value="8.60 A"/>
    <property type="chains" value="RK=1-367"/>
</dbReference>
<dbReference type="PDB" id="6LQS">
    <property type="method" value="EM"/>
    <property type="resolution" value="3.80 A"/>
    <property type="chains" value="RK=1-367"/>
</dbReference>
<dbReference type="PDB" id="6LQT">
    <property type="method" value="EM"/>
    <property type="resolution" value="4.90 A"/>
    <property type="chains" value="RK=1-367"/>
</dbReference>
<dbReference type="PDB" id="6LQU">
    <property type="method" value="EM"/>
    <property type="resolution" value="3.70 A"/>
    <property type="chains" value="RK=1-367"/>
</dbReference>
<dbReference type="PDB" id="6LQV">
    <property type="method" value="EM"/>
    <property type="resolution" value="4.80 A"/>
    <property type="chains" value="RK=1-367"/>
</dbReference>
<dbReference type="PDB" id="6ZQA">
    <property type="method" value="EM"/>
    <property type="resolution" value="4.40 A"/>
    <property type="chains" value="CM=1-367"/>
</dbReference>
<dbReference type="PDB" id="6ZQB">
    <property type="method" value="EM"/>
    <property type="resolution" value="3.90 A"/>
    <property type="chains" value="CM=1-367"/>
</dbReference>
<dbReference type="PDB" id="6ZQC">
    <property type="method" value="EM"/>
    <property type="resolution" value="3.80 A"/>
    <property type="chains" value="CM=1-367"/>
</dbReference>
<dbReference type="PDB" id="6ZQD">
    <property type="method" value="EM"/>
    <property type="resolution" value="3.80 A"/>
    <property type="chains" value="CM=1-367"/>
</dbReference>
<dbReference type="PDB" id="6ZQE">
    <property type="method" value="EM"/>
    <property type="resolution" value="7.10 A"/>
    <property type="chains" value="CM=1-367"/>
</dbReference>
<dbReference type="PDB" id="6ZQF">
    <property type="method" value="EM"/>
    <property type="resolution" value="4.90 A"/>
    <property type="chains" value="CM=1-367"/>
</dbReference>
<dbReference type="PDB" id="6ZQG">
    <property type="method" value="EM"/>
    <property type="resolution" value="3.50 A"/>
    <property type="chains" value="CM=1-367"/>
</dbReference>
<dbReference type="PDB" id="7AJT">
    <property type="method" value="EM"/>
    <property type="resolution" value="4.60 A"/>
    <property type="chains" value="CM=1-367"/>
</dbReference>
<dbReference type="PDB" id="7AJU">
    <property type="method" value="EM"/>
    <property type="resolution" value="3.80 A"/>
    <property type="chains" value="CM=1-367"/>
</dbReference>
<dbReference type="PDB" id="7D4I">
    <property type="method" value="EM"/>
    <property type="resolution" value="4.00 A"/>
    <property type="chains" value="RK=1-367"/>
</dbReference>
<dbReference type="PDB" id="7D5S">
    <property type="method" value="EM"/>
    <property type="resolution" value="4.60 A"/>
    <property type="chains" value="RK=1-367"/>
</dbReference>
<dbReference type="PDB" id="7D5T">
    <property type="method" value="EM"/>
    <property type="resolution" value="6.00 A"/>
    <property type="chains" value="RK=1-367"/>
</dbReference>
<dbReference type="PDB" id="7D63">
    <property type="method" value="EM"/>
    <property type="resolution" value="12.30 A"/>
    <property type="chains" value="RK=1-367"/>
</dbReference>
<dbReference type="PDB" id="7SUK">
    <property type="method" value="EM"/>
    <property type="resolution" value="3.99 A"/>
    <property type="chains" value="SH=7-366"/>
</dbReference>
<dbReference type="PDBsum" id="4CLQ"/>
<dbReference type="PDBsum" id="5JPQ"/>
<dbReference type="PDBsum" id="5TZS"/>
<dbReference type="PDBsum" id="5WLC"/>
<dbReference type="PDBsum" id="5WYJ"/>
<dbReference type="PDBsum" id="5WYK"/>
<dbReference type="PDBsum" id="6KE6"/>
<dbReference type="PDBsum" id="6LQP"/>
<dbReference type="PDBsum" id="6LQQ"/>
<dbReference type="PDBsum" id="6LQR"/>
<dbReference type="PDBsum" id="6LQS"/>
<dbReference type="PDBsum" id="6LQT"/>
<dbReference type="PDBsum" id="6LQU"/>
<dbReference type="PDBsum" id="6LQV"/>
<dbReference type="PDBsum" id="6ZQA"/>
<dbReference type="PDBsum" id="6ZQB"/>
<dbReference type="PDBsum" id="6ZQC"/>
<dbReference type="PDBsum" id="6ZQD"/>
<dbReference type="PDBsum" id="6ZQE"/>
<dbReference type="PDBsum" id="6ZQF"/>
<dbReference type="PDBsum" id="6ZQG"/>
<dbReference type="PDBsum" id="7AJT"/>
<dbReference type="PDBsum" id="7AJU"/>
<dbReference type="PDBsum" id="7D4I"/>
<dbReference type="PDBsum" id="7D5S"/>
<dbReference type="PDBsum" id="7D5T"/>
<dbReference type="PDBsum" id="7D63"/>
<dbReference type="PDBsum" id="7SUK"/>
<dbReference type="EMDB" id="EMD-0949"/>
<dbReference type="EMDB" id="EMD-0950"/>
<dbReference type="EMDB" id="EMD-0951"/>
<dbReference type="EMDB" id="EMD-0952"/>
<dbReference type="EMDB" id="EMD-0953"/>
<dbReference type="EMDB" id="EMD-0954"/>
<dbReference type="EMDB" id="EMD-0955"/>
<dbReference type="EMDB" id="EMD-11357"/>
<dbReference type="EMDB" id="EMD-11358"/>
<dbReference type="EMDB" id="EMD-11359"/>
<dbReference type="EMDB" id="EMD-11360"/>
<dbReference type="EMDB" id="EMD-11361"/>
<dbReference type="EMDB" id="EMD-11362"/>
<dbReference type="EMDB" id="EMD-11363"/>
<dbReference type="EMDB" id="EMD-11807"/>
<dbReference type="EMDB" id="EMD-11808"/>
<dbReference type="EMDB" id="EMD-25441"/>
<dbReference type="EMDB" id="EMD-30574"/>
<dbReference type="EMDB" id="EMD-30584"/>
<dbReference type="EMDB" id="EMD-30585"/>
<dbReference type="EMDB" id="EMD-30588"/>
<dbReference type="EMDB" id="EMD-6695"/>
<dbReference type="EMDB" id="EMD-6696"/>
<dbReference type="EMDB" id="EMD-8473"/>
<dbReference type="EMDB" id="EMD-8859"/>
<dbReference type="EMDB" id="EMD-9964"/>
<dbReference type="SMR" id="Q08096"/>
<dbReference type="BioGRID" id="34394">
    <property type="interactions" value="142"/>
</dbReference>
<dbReference type="ComplexPortal" id="CPX-1606">
    <property type="entry name" value="RCL1-BMS1 40S ribosomal subunit maturation complex"/>
</dbReference>
<dbReference type="DIP" id="DIP-4539N"/>
<dbReference type="FunCoup" id="Q08096">
    <property type="interactions" value="973"/>
</dbReference>
<dbReference type="IntAct" id="Q08096">
    <property type="interactions" value="83"/>
</dbReference>
<dbReference type="MINT" id="Q08096"/>
<dbReference type="STRING" id="4932.YOL010W"/>
<dbReference type="iPTMnet" id="Q08096"/>
<dbReference type="PaxDb" id="4932-YOL010W"/>
<dbReference type="PeptideAtlas" id="Q08096"/>
<dbReference type="EnsemblFungi" id="YOL010W_mRNA">
    <property type="protein sequence ID" value="YOL010W"/>
    <property type="gene ID" value="YOL010W"/>
</dbReference>
<dbReference type="GeneID" id="854152"/>
<dbReference type="KEGG" id="sce:YOL010W"/>
<dbReference type="AGR" id="SGD:S000005370"/>
<dbReference type="SGD" id="S000005370">
    <property type="gene designation" value="RCL1"/>
</dbReference>
<dbReference type="VEuPathDB" id="FungiDB:YOL010W"/>
<dbReference type="eggNOG" id="KOG3980">
    <property type="taxonomic scope" value="Eukaryota"/>
</dbReference>
<dbReference type="GeneTree" id="ENSGT00530000063404"/>
<dbReference type="HOGENOM" id="CLU_027882_1_0_1"/>
<dbReference type="InParanoid" id="Q08096"/>
<dbReference type="OMA" id="YTDQNKG"/>
<dbReference type="OrthoDB" id="1911237at2759"/>
<dbReference type="BioCyc" id="YEAST:G3O-33427-MONOMER"/>
<dbReference type="Reactome" id="R-SCE-6791226">
    <property type="pathway name" value="Major pathway of rRNA processing in the nucleolus and cytosol"/>
</dbReference>
<dbReference type="BioGRID-ORCS" id="854152">
    <property type="hits" value="0 hits in 10 CRISPR screens"/>
</dbReference>
<dbReference type="CD-CODE" id="BDAE0F88">
    <property type="entry name" value="Nucleolus"/>
</dbReference>
<dbReference type="EvolutionaryTrace" id="Q08096"/>
<dbReference type="PRO" id="PR:Q08096"/>
<dbReference type="Proteomes" id="UP000002311">
    <property type="component" value="Chromosome XV"/>
</dbReference>
<dbReference type="RNAct" id="Q08096">
    <property type="molecule type" value="protein"/>
</dbReference>
<dbReference type="GO" id="GO:0030686">
    <property type="term" value="C:90S preribosome"/>
    <property type="evidence" value="ECO:0000314"/>
    <property type="project" value="GO_Central"/>
</dbReference>
<dbReference type="GO" id="GO:0005730">
    <property type="term" value="C:nucleolus"/>
    <property type="evidence" value="ECO:0000314"/>
    <property type="project" value="SGD"/>
</dbReference>
<dbReference type="GO" id="GO:0005654">
    <property type="term" value="C:nucleoplasm"/>
    <property type="evidence" value="ECO:0000304"/>
    <property type="project" value="Reactome"/>
</dbReference>
<dbReference type="GO" id="GO:0032040">
    <property type="term" value="C:small-subunit processome"/>
    <property type="evidence" value="ECO:0000353"/>
    <property type="project" value="ComplexPortal"/>
</dbReference>
<dbReference type="GO" id="GO:0008047">
    <property type="term" value="F:enzyme activator activity"/>
    <property type="evidence" value="ECO:0000314"/>
    <property type="project" value="SGD"/>
</dbReference>
<dbReference type="GO" id="GO:0004521">
    <property type="term" value="F:RNA endonuclease activity"/>
    <property type="evidence" value="ECO:0000314"/>
    <property type="project" value="SGD"/>
</dbReference>
<dbReference type="GO" id="GO:0000480">
    <property type="term" value="P:endonucleolytic cleavage in 5'-ETS of tricistronic rRNA transcript (SSU-rRNA, 5.8S rRNA, LSU-rRNA)"/>
    <property type="evidence" value="ECO:0000315"/>
    <property type="project" value="SGD"/>
</dbReference>
<dbReference type="GO" id="GO:0000447">
    <property type="term" value="P:endonucleolytic cleavage in ITS1 to separate SSU-rRNA from 5.8S rRNA and LSU-rRNA from tricistronic rRNA transcript (SSU-rRNA, 5.8S rRNA, LSU-rRNA)"/>
    <property type="evidence" value="ECO:0000314"/>
    <property type="project" value="GO_Central"/>
</dbReference>
<dbReference type="GO" id="GO:0000479">
    <property type="term" value="P:endonucleolytic cleavage of tricistronic rRNA transcript (SSU-rRNA, 5.8S rRNA, LSU-rRNA)"/>
    <property type="evidence" value="ECO:0000318"/>
    <property type="project" value="GO_Central"/>
</dbReference>
<dbReference type="GO" id="GO:0000472">
    <property type="term" value="P:endonucleolytic cleavage to generate mature 5'-end of SSU-rRNA from (SSU-rRNA, 5.8S rRNA, LSU-rRNA)"/>
    <property type="evidence" value="ECO:0000315"/>
    <property type="project" value="SGD"/>
</dbReference>
<dbReference type="GO" id="GO:0030490">
    <property type="term" value="P:maturation of SSU-rRNA"/>
    <property type="evidence" value="ECO:0000303"/>
    <property type="project" value="ComplexPortal"/>
</dbReference>
<dbReference type="GO" id="GO:2000232">
    <property type="term" value="P:regulation of rRNA processing"/>
    <property type="evidence" value="ECO:0000314"/>
    <property type="project" value="ComplexPortal"/>
</dbReference>
<dbReference type="GO" id="GO:0042274">
    <property type="term" value="P:ribosomal small subunit biogenesis"/>
    <property type="evidence" value="ECO:0000303"/>
    <property type="project" value="ComplexPortal"/>
</dbReference>
<dbReference type="GO" id="GO:0006364">
    <property type="term" value="P:rRNA processing"/>
    <property type="evidence" value="ECO:0000314"/>
    <property type="project" value="MGI"/>
</dbReference>
<dbReference type="CDD" id="cd00875">
    <property type="entry name" value="RNA_Cyclase_Class_I"/>
    <property type="match status" value="1"/>
</dbReference>
<dbReference type="FunFam" id="3.30.360.20:FF:000004">
    <property type="entry name" value="18S rRNA biogenesis protein"/>
    <property type="match status" value="1"/>
</dbReference>
<dbReference type="Gene3D" id="3.65.10.20">
    <property type="entry name" value="RNA 3'-terminal phosphate cyclase domain"/>
    <property type="match status" value="1"/>
</dbReference>
<dbReference type="Gene3D" id="3.30.360.20">
    <property type="entry name" value="RNA 3'-terminal phosphate cyclase, insert domain"/>
    <property type="match status" value="1"/>
</dbReference>
<dbReference type="InterPro" id="IPR013791">
    <property type="entry name" value="RNA3'-term_phos_cycl_insert"/>
</dbReference>
<dbReference type="InterPro" id="IPR023797">
    <property type="entry name" value="RNA3'_phos_cyclase_dom"/>
</dbReference>
<dbReference type="InterPro" id="IPR037136">
    <property type="entry name" value="RNA3'_phos_cyclase_dom_sf"/>
</dbReference>
<dbReference type="InterPro" id="IPR000228">
    <property type="entry name" value="RNA3'_term_phos_cyc"/>
</dbReference>
<dbReference type="InterPro" id="IPR016443">
    <property type="entry name" value="RNA3'_term_phos_cyc_type_2"/>
</dbReference>
<dbReference type="InterPro" id="IPR020719">
    <property type="entry name" value="RNA3'_term_phos_cycl-like_CS"/>
</dbReference>
<dbReference type="InterPro" id="IPR013792">
    <property type="entry name" value="RNA3'P_cycl/enolpyr_Trfase_a/b"/>
</dbReference>
<dbReference type="InterPro" id="IPR036553">
    <property type="entry name" value="RPTC_insert"/>
</dbReference>
<dbReference type="NCBIfam" id="TIGR03400">
    <property type="entry name" value="18S_RNA_Rcl1p"/>
    <property type="match status" value="1"/>
</dbReference>
<dbReference type="PANTHER" id="PTHR11096">
    <property type="entry name" value="RNA 3' TERMINAL PHOSPHATE CYCLASE"/>
    <property type="match status" value="1"/>
</dbReference>
<dbReference type="PANTHER" id="PTHR11096:SF1">
    <property type="entry name" value="RNA 3'-TERMINAL PHOSPHATE CYCLASE-LIKE PROTEIN"/>
    <property type="match status" value="1"/>
</dbReference>
<dbReference type="Pfam" id="PF01137">
    <property type="entry name" value="RTC"/>
    <property type="match status" value="1"/>
</dbReference>
<dbReference type="Pfam" id="PF05189">
    <property type="entry name" value="RTC_insert"/>
    <property type="match status" value="1"/>
</dbReference>
<dbReference type="SUPFAM" id="SSF55205">
    <property type="entry name" value="EPT/RTPC-like"/>
    <property type="match status" value="1"/>
</dbReference>
<dbReference type="PROSITE" id="PS01287">
    <property type="entry name" value="RTC"/>
    <property type="match status" value="1"/>
</dbReference>
<evidence type="ECO:0000269" key="1">
    <source>
    </source>
</evidence>
<evidence type="ECO:0000269" key="2">
    <source>
    </source>
</evidence>
<evidence type="ECO:0000269" key="3">
    <source>
    </source>
</evidence>
<evidence type="ECO:0000269" key="4">
    <source>
    </source>
</evidence>
<evidence type="ECO:0000269" key="5">
    <source>
    </source>
</evidence>
<evidence type="ECO:0000269" key="6">
    <source>
    </source>
</evidence>
<evidence type="ECO:0000269" key="7">
    <source>
    </source>
</evidence>
<evidence type="ECO:0000269" key="8">
    <source>
    </source>
</evidence>
<evidence type="ECO:0000269" key="9">
    <source>
    </source>
</evidence>
<evidence type="ECO:0000269" key="10">
    <source>
    </source>
</evidence>
<evidence type="ECO:0000269" key="11">
    <source>
    </source>
</evidence>
<evidence type="ECO:0000269" key="12">
    <source>
    </source>
</evidence>
<evidence type="ECO:0000269" key="13">
    <source>
    </source>
</evidence>
<evidence type="ECO:0000269" key="14">
    <source>
    </source>
</evidence>
<evidence type="ECO:0000269" key="15">
    <source ref="14"/>
</evidence>
<evidence type="ECO:0000303" key="16">
    <source>
    </source>
</evidence>
<evidence type="ECO:0000305" key="17"/>
<evidence type="ECO:0007744" key="18">
    <source>
        <dbReference type="PDB" id="4CLQ"/>
    </source>
</evidence>
<evidence type="ECO:0007744" key="19">
    <source>
        <dbReference type="PDB" id="5JPQ"/>
    </source>
</evidence>
<evidence type="ECO:0007744" key="20">
    <source>
        <dbReference type="PDB" id="5TZS"/>
    </source>
</evidence>
<evidence type="ECO:0007744" key="21">
    <source>
        <dbReference type="PDB" id="5WLC"/>
    </source>
</evidence>
<evidence type="ECO:0007744" key="22">
    <source>
        <dbReference type="PDB" id="5WYJ"/>
    </source>
</evidence>
<evidence type="ECO:0007744" key="23">
    <source>
        <dbReference type="PDB" id="5WYK"/>
    </source>
</evidence>
<evidence type="ECO:0007744" key="24">
    <source>
        <dbReference type="PDB" id="6KE6"/>
    </source>
</evidence>
<evidence type="ECO:0007744" key="25">
    <source>
        <dbReference type="PDB" id="6LQP"/>
    </source>
</evidence>
<evidence type="ECO:0007744" key="26">
    <source>
        <dbReference type="PDB" id="6LQQ"/>
    </source>
</evidence>
<evidence type="ECO:0007744" key="27">
    <source>
        <dbReference type="PDB" id="6LQR"/>
    </source>
</evidence>
<evidence type="ECO:0007744" key="28">
    <source>
        <dbReference type="PDB" id="6LQS"/>
    </source>
</evidence>
<evidence type="ECO:0007744" key="29">
    <source>
        <dbReference type="PDB" id="6LQT"/>
    </source>
</evidence>
<evidence type="ECO:0007744" key="30">
    <source>
        <dbReference type="PDB" id="6LQU"/>
    </source>
</evidence>
<evidence type="ECO:0007744" key="31">
    <source>
        <dbReference type="PDB" id="6LQV"/>
    </source>
</evidence>
<evidence type="ECO:0007744" key="32">
    <source>
        <dbReference type="PDB" id="6ZQA"/>
    </source>
</evidence>
<evidence type="ECO:0007744" key="33">
    <source>
        <dbReference type="PDB" id="6ZQB"/>
    </source>
</evidence>
<evidence type="ECO:0007744" key="34">
    <source>
        <dbReference type="PDB" id="6ZQC"/>
    </source>
</evidence>
<evidence type="ECO:0007744" key="35">
    <source>
        <dbReference type="PDB" id="6ZQD"/>
    </source>
</evidence>
<evidence type="ECO:0007744" key="36">
    <source>
        <dbReference type="PDB" id="6ZQE"/>
    </source>
</evidence>
<evidence type="ECO:0007744" key="37">
    <source>
        <dbReference type="PDB" id="6ZQF"/>
    </source>
</evidence>
<evidence type="ECO:0007744" key="38">
    <source>
        <dbReference type="PDB" id="6ZQG"/>
    </source>
</evidence>
<evidence type="ECO:0007744" key="39">
    <source>
        <dbReference type="PDB" id="7AJT"/>
    </source>
</evidence>
<evidence type="ECO:0007744" key="40">
    <source>
        <dbReference type="PDB" id="7AJU"/>
    </source>
</evidence>
<evidence type="ECO:0007744" key="41">
    <source>
        <dbReference type="PDB" id="7D4I"/>
    </source>
</evidence>
<evidence type="ECO:0007744" key="42">
    <source>
        <dbReference type="PDB" id="7D5S"/>
    </source>
</evidence>
<evidence type="ECO:0007744" key="43">
    <source>
        <dbReference type="PDB" id="7D5T"/>
    </source>
</evidence>
<evidence type="ECO:0007744" key="44">
    <source>
        <dbReference type="PDB" id="7D63"/>
    </source>
</evidence>
<evidence type="ECO:0007744" key="45">
    <source>
        <dbReference type="PDB" id="7SUK"/>
    </source>
</evidence>
<evidence type="ECO:0007744" key="46">
    <source>
    </source>
</evidence>
<evidence type="ECO:0007829" key="47">
    <source>
        <dbReference type="PDB" id="4CLQ"/>
    </source>
</evidence>
<name>RCL1_YEAST</name>
<organism>
    <name type="scientific">Saccharomyces cerevisiae (strain ATCC 204508 / S288c)</name>
    <name type="common">Baker's yeast</name>
    <dbReference type="NCBI Taxonomy" id="559292"/>
    <lineage>
        <taxon>Eukaryota</taxon>
        <taxon>Fungi</taxon>
        <taxon>Dikarya</taxon>
        <taxon>Ascomycota</taxon>
        <taxon>Saccharomycotina</taxon>
        <taxon>Saccharomycetes</taxon>
        <taxon>Saccharomycetales</taxon>
        <taxon>Saccharomycetaceae</taxon>
        <taxon>Saccharomyces</taxon>
    </lineage>
</organism>
<reference key="1">
    <citation type="journal article" date="1997" name="Nature">
        <title>The nucleotide sequence of Saccharomyces cerevisiae chromosome XV.</title>
        <authorList>
            <person name="Dujon B."/>
            <person name="Albermann K."/>
            <person name="Aldea M."/>
            <person name="Alexandraki D."/>
            <person name="Ansorge W."/>
            <person name="Arino J."/>
            <person name="Benes V."/>
            <person name="Bohn C."/>
            <person name="Bolotin-Fukuhara M."/>
            <person name="Bordonne R."/>
            <person name="Boyer J."/>
            <person name="Camasses A."/>
            <person name="Casamayor A."/>
            <person name="Casas C."/>
            <person name="Cheret G."/>
            <person name="Cziepluch C."/>
            <person name="Daignan-Fornier B."/>
            <person name="Dang V.-D."/>
            <person name="de Haan M."/>
            <person name="Delius H."/>
            <person name="Durand P."/>
            <person name="Fairhead C."/>
            <person name="Feldmann H."/>
            <person name="Gaillon L."/>
            <person name="Galisson F."/>
            <person name="Gamo F.-J."/>
            <person name="Gancedo C."/>
            <person name="Goffeau A."/>
            <person name="Goulding S.E."/>
            <person name="Grivell L.A."/>
            <person name="Habbig B."/>
            <person name="Hand N.J."/>
            <person name="Hani J."/>
            <person name="Hattenhorst U."/>
            <person name="Hebling U."/>
            <person name="Hernando Y."/>
            <person name="Herrero E."/>
            <person name="Heumann K."/>
            <person name="Hiesel R."/>
            <person name="Hilger F."/>
            <person name="Hofmann B."/>
            <person name="Hollenberg C.P."/>
            <person name="Hughes B."/>
            <person name="Jauniaux J.-C."/>
            <person name="Kalogeropoulos A."/>
            <person name="Katsoulou C."/>
            <person name="Kordes E."/>
            <person name="Lafuente M.J."/>
            <person name="Landt O."/>
            <person name="Louis E.J."/>
            <person name="Maarse A.C."/>
            <person name="Madania A."/>
            <person name="Mannhaupt G."/>
            <person name="Marck C."/>
            <person name="Martin R.P."/>
            <person name="Mewes H.-W."/>
            <person name="Michaux G."/>
            <person name="Paces V."/>
            <person name="Parle-McDermott A.G."/>
            <person name="Pearson B.M."/>
            <person name="Perrin A."/>
            <person name="Pettersson B."/>
            <person name="Poch O."/>
            <person name="Pohl T.M."/>
            <person name="Poirey R."/>
            <person name="Portetelle D."/>
            <person name="Pujol A."/>
            <person name="Purnelle B."/>
            <person name="Ramezani Rad M."/>
            <person name="Rechmann S."/>
            <person name="Schwager C."/>
            <person name="Schweizer M."/>
            <person name="Sor F."/>
            <person name="Sterky F."/>
            <person name="Tarassov I.A."/>
            <person name="Teodoru C."/>
            <person name="Tettelin H."/>
            <person name="Thierry A."/>
            <person name="Tobiasch E."/>
            <person name="Tzermia M."/>
            <person name="Uhlen M."/>
            <person name="Unseld M."/>
            <person name="Valens M."/>
            <person name="Vandenbol M."/>
            <person name="Vetter I."/>
            <person name="Vlcek C."/>
            <person name="Voet M."/>
            <person name="Volckaert G."/>
            <person name="Voss H."/>
            <person name="Wambutt R."/>
            <person name="Wedler H."/>
            <person name="Wiemann S."/>
            <person name="Winsor B."/>
            <person name="Wolfe K.H."/>
            <person name="Zollner A."/>
            <person name="Zumstein E."/>
            <person name="Kleine K."/>
        </authorList>
    </citation>
    <scope>NUCLEOTIDE SEQUENCE [LARGE SCALE GENOMIC DNA]</scope>
    <source>
        <strain>ATCC 204508 / S288c</strain>
    </source>
</reference>
<reference key="2">
    <citation type="journal article" date="2014" name="G3 (Bethesda)">
        <title>The reference genome sequence of Saccharomyces cerevisiae: Then and now.</title>
        <authorList>
            <person name="Engel S.R."/>
            <person name="Dietrich F.S."/>
            <person name="Fisk D.G."/>
            <person name="Binkley G."/>
            <person name="Balakrishnan R."/>
            <person name="Costanzo M.C."/>
            <person name="Dwight S.S."/>
            <person name="Hitz B.C."/>
            <person name="Karra K."/>
            <person name="Nash R.S."/>
            <person name="Weng S."/>
            <person name="Wong E.D."/>
            <person name="Lloyd P."/>
            <person name="Skrzypek M.S."/>
            <person name="Miyasato S.R."/>
            <person name="Simison M."/>
            <person name="Cherry J.M."/>
        </authorList>
    </citation>
    <scope>GENOME REANNOTATION</scope>
    <source>
        <strain>ATCC 204508 / S288c</strain>
    </source>
</reference>
<reference key="3">
    <citation type="journal article" date="2000" name="EMBO J.">
        <title>Rcl1p, the yeast protein similar to the RNA 3'-phosphate cyclase, associates with U3 snoRNP and is required for 18S rRNA biogenesis.</title>
        <authorList>
            <person name="Billy E."/>
            <person name="Wegierski T."/>
            <person name="Nasr F."/>
            <person name="Filipowicz W."/>
        </authorList>
    </citation>
    <scope>FUNCTION</scope>
    <scope>INTERACTION WITH BMS1</scope>
</reference>
<reference key="4">
    <citation type="journal article" date="2001" name="RNA">
        <title>Bms1p, a G-domain-containing protein, associates with Rcl1p and is required for 18S rRNA biogenesis in yeast.</title>
        <authorList>
            <person name="Wegierski T."/>
            <person name="Billy E."/>
            <person name="Nasr F."/>
            <person name="Filipowicz W."/>
        </authorList>
    </citation>
    <scope>FUNCTION</scope>
    <scope>INTERACTION WITH BMS1</scope>
</reference>
<reference key="5">
    <citation type="journal article" date="2003" name="Nature">
        <title>Global analysis of protein expression in yeast.</title>
        <authorList>
            <person name="Ghaemmaghami S."/>
            <person name="Huh W.-K."/>
            <person name="Bower K."/>
            <person name="Howson R.W."/>
            <person name="Belle A."/>
            <person name="Dephoure N."/>
            <person name="O'Shea E.K."/>
            <person name="Weissman J.S."/>
        </authorList>
    </citation>
    <scope>LEVEL OF PROTEIN EXPRESSION [LARGE SCALE ANALYSIS]</scope>
</reference>
<reference key="6">
    <citation type="journal article" date="2005" name="Mol. Cell">
        <title>An essential GTPase promotes assembly of preribosomal RNA processing complexes.</title>
        <authorList>
            <person name="Karbstein K."/>
            <person name="Jonas S."/>
            <person name="Doudna J.A."/>
        </authorList>
    </citation>
    <scope>FUNCTION</scope>
    <scope>INTERACTION WITH BMS1 AND U3 SNORNA</scope>
</reference>
<reference key="7">
    <citation type="journal article" date="2006" name="J. Mol. Biol.">
        <title>GTP-dependent formation of a ribonucleoprotein subcomplex required for ribosome biogenesis.</title>
        <authorList>
            <person name="Karbstein K."/>
            <person name="Doudna J.A."/>
        </authorList>
    </citation>
    <scope>FUNCTION</scope>
    <scope>INTERACTION WITH BMS1 AND U3 SNORNA</scope>
</reference>
<reference key="8">
    <citation type="journal article" date="2012" name="Proc. Natl. Acad. Sci. U.S.A.">
        <title>N-terminal acetylome analyses and functional insights of the N-terminal acetyltransferase NatB.</title>
        <authorList>
            <person name="Van Damme P."/>
            <person name="Lasa M."/>
            <person name="Polevoda B."/>
            <person name="Gazquez C."/>
            <person name="Elosegui-Artola A."/>
            <person name="Kim D.S."/>
            <person name="De Juan-Pardo E."/>
            <person name="Demeyer K."/>
            <person name="Hole K."/>
            <person name="Larrea E."/>
            <person name="Timmerman E."/>
            <person name="Prieto J."/>
            <person name="Arnesen T."/>
            <person name="Sherman F."/>
            <person name="Gevaert K."/>
            <person name="Aldabe R."/>
        </authorList>
    </citation>
    <scope>ACETYLATION [LARGE SCALE ANALYSIS] AT SER-2</scope>
    <scope>CLEAVAGE OF INITIATOR METHIONINE [LARGE SCALE ANALYSIS]</scope>
    <scope>IDENTIFICATION BY MASS SPECTROMETRY [LARGE SCALE ANALYSIS]</scope>
</reference>
<reference evidence="18" key="9">
    <citation type="journal article" date="2014" name="Nucleic Acids Res.">
        <title>Crucial role of the Rcl1p-Bms1p interaction for yeast pre-ribosomal RNA processing.</title>
        <authorList>
            <person name="Delprato A."/>
            <person name="Al Kadri Y."/>
            <person name="Perebaskine N."/>
            <person name="Monfoulet C."/>
            <person name="Henry Y."/>
            <person name="Henras A.K."/>
            <person name="Fribourg S."/>
        </authorList>
    </citation>
    <scope>X-RAY CRYSTALLOGRAPHY (2.02 ANGSTROMS) IN COMPLEX WITH BMS1</scope>
    <scope>INTERACTION WITH RCL1</scope>
    <scope>FUNCTION</scope>
    <scope>SUBCELLULAR LOCATION</scope>
    <scope>MUTAGENESIS OF CYS-277 AND ARG-327</scope>
</reference>
<reference evidence="19" key="10">
    <citation type="journal article" date="2016" name="Cell">
        <title>Architecture of the 90S Pre-ribosome: A Structural View on the Birth of the Eukaryotic Ribosome.</title>
        <authorList>
            <person name="Kornprobst M."/>
            <person name="Turk M."/>
            <person name="Kellner N."/>
            <person name="Cheng J."/>
            <person name="Flemming D."/>
            <person name="Kos-Braun I."/>
            <person name="Kos M."/>
            <person name="Thoms M."/>
            <person name="Berninghausen O."/>
            <person name="Beckmann R."/>
            <person name="Hurt E."/>
        </authorList>
    </citation>
    <scope>STRUCTURE BY ELECTRON MICROSCOPY (7.30 ANGSTROMS) IN COMPLEX WITHIN THE 90S SMALL-SUBUNIT PROCESSOME</scope>
</reference>
<reference evidence="22 23" key="11">
    <citation type="journal article" date="2017" name="Elife">
        <title>Molecular architecture of the 90S small subunit pre-ribosome.</title>
        <authorList>
            <person name="Sun Q."/>
            <person name="Zhu X."/>
            <person name="Qi J."/>
            <person name="An W."/>
            <person name="Lan P."/>
            <person name="Tan D."/>
            <person name="Chen R."/>
            <person name="Wang B."/>
            <person name="Zheng S."/>
            <person name="Zhang C."/>
            <person name="Chen X."/>
            <person name="Zhang W."/>
            <person name="Chen J."/>
            <person name="Dong M.Q."/>
            <person name="Ye K."/>
        </authorList>
    </citation>
    <scope>STRUCTURE BY ELECTRON MICROSCOPY (4.50 ANGSTROMS) IN COMPLEX WITHIN THE 90S SMALL-SUBUNIT PROCESSOME</scope>
</reference>
<reference evidence="21" key="12">
    <citation type="journal article" date="2017" name="Nat. Struct. Mol. Biol.">
        <title>The complete structure of the small-subunit processome.</title>
        <authorList>
            <person name="Barandun J."/>
            <person name="Chaker-Margot M."/>
            <person name="Hunziker M."/>
            <person name="Molloy K.R."/>
            <person name="Chait B.T."/>
            <person name="Klinge S."/>
        </authorList>
    </citation>
    <scope>STRUCTURE BY ELECTRON MICROSCOPY (3.80 ANGSTROMS) IN COMPLEX WITHIN THE 90S SMALL-SUBUNIT PROCESSOME</scope>
</reference>
<reference evidence="20" key="13">
    <citation type="journal article" date="2017" name="Science">
        <title>Architecture of the yeast small subunit processome.</title>
        <authorList>
            <person name="Chaker-Margot M."/>
            <person name="Barandun J."/>
            <person name="Hunziker M."/>
            <person name="Klinge S."/>
        </authorList>
    </citation>
    <scope>STRUCTURE BY ELECTRON MICROSCOPY (5.10 ANGSTROMS) IN COMPLEX WITHIN THE 90S SMALL-SUBUNIT PROCESSOME</scope>
</reference>
<reference evidence="24" key="14">
    <citation type="submission" date="2019-07" db="PDB data bank">
        <title>3.4 angstrom cryo-EM structure of yeast 90S small subunit preribosome.</title>
        <authorList>
            <person name="Du Y."/>
            <person name="An W."/>
            <person name="Qi S."/>
            <person name="Ye K."/>
        </authorList>
    </citation>
    <scope>STRUCTURE BY ELECTRON MICROSCOPY (3.40 ANGSTROMS) IN COMPLEX WITHIN THE 90S SMALL-SUBUNIT PROCESSOME</scope>
</reference>
<reference evidence="32 33 34 35 36 37 38" key="15">
    <citation type="journal article" date="2020" name="Science">
        <title>90S pre-ribosome transformation into the primordial 40S subunit.</title>
        <authorList>
            <person name="Cheng J."/>
            <person name="Lau B."/>
            <person name="La Venuta G."/>
            <person name="Ameismeier M."/>
            <person name="Berninghausen O."/>
            <person name="Hurt E."/>
            <person name="Beckmann R."/>
        </authorList>
    </citation>
    <scope>STRUCTURE BY ELECTRON MICROSCOPY (3.50 ANGSTROMS) IN COMPLEX WITHIN THE 90S SMALL-SUBUNIT PROCESSOME</scope>
</reference>
<reference evidence="25 26 27 28 29 30 31" key="16">
    <citation type="journal article" date="2020" name="Science">
        <title>Cryo-EM structure of 90S small ribosomal subunit precursors in transition states.</title>
        <authorList>
            <person name="Du Y."/>
            <person name="An W."/>
            <person name="Zhu X."/>
            <person name="Sun Q."/>
            <person name="Qi J."/>
            <person name="Ye K."/>
        </authorList>
    </citation>
    <scope>STRUCTURE BY ELECTRON MICROSCOPY (3.20 ANGSTROMS) IN COMPLEX WITHIN THE 90S SMALL-SUBUNIT PROCESSOME</scope>
</reference>
<reference evidence="44" key="17">
    <citation type="submission" date="2020-09" db="PDB data bank">
        <title>Cryo-EM structure of 90S preribosome with inactive Utp24 (state C).</title>
        <authorList>
            <person name="Ye K."/>
        </authorList>
    </citation>
    <scope>STRUCTURE BY ELECTRON MICROSCOPY (12.30 ANGSTROMS)</scope>
</reference>
<reference evidence="42" key="18">
    <citation type="submission" date="2020-09" db="PDB data bank">
        <title>Cryo-EM structure of 90S preribosome with inactive Utp24 (state A2).</title>
        <authorList>
            <person name="Ye K."/>
        </authorList>
    </citation>
    <scope>STRUCTURE BY ELECTRON MICROSCOPY (4.60 ANGSTROMS)</scope>
</reference>
<reference evidence="43" key="19">
    <citation type="submission" date="2020-09" db="PDB data bank">
        <title>Cryo-EM structure of 90S preribosome with inactive Utp24 (state F1).</title>
        <authorList>
            <person name="Ye K."/>
        </authorList>
    </citation>
    <scope>STRUCTURE BY ELECTRON MICROSCOPY (6.00 ANGSTROMS)</scope>
</reference>
<reference evidence="41" key="20">
    <citation type="submission" date="2020-09" db="PDB data bank">
        <title>Cryo-EM structure of 90S small ribosomal precursors complex with Dhr1.</title>
        <authorList>
            <person name="Ye K."/>
        </authorList>
    </citation>
    <scope>STRUCTURE BY ELECTRON MICROSCOPY (4.00 ANGSTROMS)</scope>
</reference>
<reference evidence="39 40" key="21">
    <citation type="journal article" date="2021" name="Mol. Cell">
        <title>Structure of the Maturing 90S Pre-ribosome in Association with the RNA Exosome.</title>
        <authorList>
            <person name="Lau B."/>
            <person name="Cheng J."/>
            <person name="Flemming D."/>
            <person name="La Venuta G."/>
            <person name="Berninghausen O."/>
            <person name="Beckmann R."/>
            <person name="Hurt E."/>
        </authorList>
    </citation>
    <scope>STRUCTURE BY ELECTRON MICROSCOPY (3.80 ANGSTROMS) IN COMPLEX WITHIN THE 90S SMALL-SUBUNIT PROCESSOME</scope>
</reference>
<reference evidence="45" key="22">
    <citation type="journal article" date="2022" name="Commun. Biol.">
        <title>Artificial intelligence-assisted cryoEM structure of Bfr2-Lcp5 complex observed in the yeast small subunit processome.</title>
        <authorList>
            <person name="Zhao Y."/>
            <person name="Rai J."/>
            <person name="Xu C."/>
            <person name="He H."/>
            <person name="Li H."/>
        </authorList>
    </citation>
    <scope>STRUCTURE BY ELECTRON MICROSCOPY (3.99 ANGSTROMS) OF 7-366 IN COMPLEX WITHIN THE 90S SMALL-SUBUNIT PROCESSOME</scope>
</reference>
<feature type="initiator methionine" description="Removed" evidence="46">
    <location>
        <position position="1"/>
    </location>
</feature>
<feature type="chain" id="PRO_0000156444" description="rRNA processing protein RCL1">
    <location>
        <begin position="2"/>
        <end position="367"/>
    </location>
</feature>
<feature type="modified residue" description="N-acetylserine" evidence="46">
    <location>
        <position position="2"/>
    </location>
</feature>
<feature type="mutagenesis site" description="Impairs the interaction with BMS1 and affects pre-rRNA processing at sites A0, A1 and A2." evidence="6">
    <original>C</original>
    <variation>R</variation>
    <location>
        <position position="277"/>
    </location>
</feature>
<feature type="mutagenesis site" description="Impairs the interaction with BMS1 and affects pre-rRNA processing at sites A0, A1 and A2." evidence="6">
    <original>R</original>
    <variation>A</variation>
    <location>
        <position position="327"/>
    </location>
</feature>
<feature type="strand" evidence="47">
    <location>
        <begin position="9"/>
        <end position="14"/>
    </location>
</feature>
<feature type="helix" evidence="47">
    <location>
        <begin position="17"/>
        <end position="27"/>
    </location>
</feature>
<feature type="strand" evidence="47">
    <location>
        <begin position="31"/>
        <end position="34"/>
    </location>
</feature>
<feature type="turn" evidence="47">
    <location>
        <begin position="36"/>
        <end position="39"/>
    </location>
</feature>
<feature type="strand" evidence="47">
    <location>
        <begin position="40"/>
        <end position="42"/>
    </location>
</feature>
<feature type="helix" evidence="47">
    <location>
        <begin position="47"/>
        <end position="59"/>
    </location>
</feature>
<feature type="strand" evidence="47">
    <location>
        <begin position="60"/>
        <end position="62"/>
    </location>
</feature>
<feature type="strand" evidence="47">
    <location>
        <begin position="64"/>
        <end position="67"/>
    </location>
</feature>
<feature type="strand" evidence="47">
    <location>
        <begin position="74"/>
        <end position="77"/>
    </location>
</feature>
<feature type="strand" evidence="47">
    <location>
        <begin position="84"/>
        <end position="89"/>
    </location>
</feature>
<feature type="helix" evidence="47">
    <location>
        <begin position="96"/>
        <end position="104"/>
    </location>
</feature>
<feature type="helix" evidence="47">
    <location>
        <begin position="107"/>
        <end position="109"/>
    </location>
</feature>
<feature type="strand" evidence="47">
    <location>
        <begin position="114"/>
        <end position="120"/>
    </location>
</feature>
<feature type="strand" evidence="47">
    <location>
        <begin position="125"/>
        <end position="127"/>
    </location>
</feature>
<feature type="helix" evidence="47">
    <location>
        <begin position="130"/>
        <end position="135"/>
    </location>
</feature>
<feature type="helix" evidence="47">
    <location>
        <begin position="137"/>
        <end position="143"/>
    </location>
</feature>
<feature type="strand" evidence="47">
    <location>
        <begin position="150"/>
        <end position="155"/>
    </location>
</feature>
<feature type="turn" evidence="47">
    <location>
        <begin position="159"/>
        <end position="161"/>
    </location>
</feature>
<feature type="strand" evidence="47">
    <location>
        <begin position="164"/>
        <end position="170"/>
    </location>
</feature>
<feature type="strand" evidence="47">
    <location>
        <begin position="190"/>
        <end position="200"/>
    </location>
</feature>
<feature type="helix" evidence="47">
    <location>
        <begin position="203"/>
        <end position="216"/>
    </location>
</feature>
<feature type="strand" evidence="47">
    <location>
        <begin position="219"/>
        <end position="230"/>
    </location>
</feature>
<feature type="helix" evidence="47">
    <location>
        <begin position="233"/>
        <end position="235"/>
    </location>
</feature>
<feature type="strand" evidence="47">
    <location>
        <begin position="240"/>
        <end position="249"/>
    </location>
</feature>
<feature type="turn" evidence="47">
    <location>
        <begin position="250"/>
        <end position="253"/>
    </location>
</feature>
<feature type="strand" evidence="47">
    <location>
        <begin position="254"/>
        <end position="261"/>
    </location>
</feature>
<feature type="helix" evidence="47">
    <location>
        <begin position="268"/>
        <end position="284"/>
    </location>
</feature>
<feature type="strand" evidence="47">
    <location>
        <begin position="287"/>
        <end position="289"/>
    </location>
</feature>
<feature type="turn" evidence="47">
    <location>
        <begin position="291"/>
        <end position="293"/>
    </location>
</feature>
<feature type="helix" evidence="47">
    <location>
        <begin position="294"/>
        <end position="302"/>
    </location>
</feature>
<feature type="strand" evidence="47">
    <location>
        <begin position="306"/>
        <end position="313"/>
    </location>
</feature>
<feature type="helix" evidence="47">
    <location>
        <begin position="315"/>
        <end position="317"/>
    </location>
</feature>
<feature type="helix" evidence="47">
    <location>
        <begin position="320"/>
        <end position="333"/>
    </location>
</feature>
<feature type="strand" evidence="47">
    <location>
        <begin position="338"/>
        <end position="341"/>
    </location>
</feature>
<feature type="strand" evidence="47">
    <location>
        <begin position="350"/>
        <end position="355"/>
    </location>
</feature>
<proteinExistence type="evidence at protein level"/>
<protein>
    <recommendedName>
        <fullName evidence="16">rRNA processing protein RCL1</fullName>
    </recommendedName>
    <alternativeName>
        <fullName evidence="16">RNA 3'-terminal phosphate cyclase-like protein 1</fullName>
    </alternativeName>
</protein>
<comment type="function">
    <text evidence="1 2 4 5 6">Does not have cyclase activity (PubMed:10790377). Plays a role in 40S-ribosomal-subunit biogenesis in the early pre-rRNA processing steps at sites A0, A1 and A2 that are required for proper maturation of the 18S RNA (PubMed:10790377, PubMed:11565748, PubMed:16307926, PubMed:16376378, PubMed:25064857). RCL1 activates BMS1 by promoting GDP/GTP exchange (PubMed:16307926, PubMed:16376378).</text>
</comment>
<comment type="subunit">
    <text evidence="1 2 4 5 6 7 8 9 10 11 12 13 14 15">Interacts directly with BMS1 and the U3 snoRNA to form a stable subcomplex (PubMed:10790377, PubMed:11565748, PubMed:16307926, PubMed:16376378, PubMed:25064857). Component of the 90S small subunit processome also known as 90S pre-ribosome that consists of the 35S pre-rRNA, early-associating ribosomal proteins most of which are part of the small ribosomal subunit, the U3 snoRNA and associated proteins (PubMed:27419870, PubMed:27980088, PubMed:28244370, PubMed:28945246, PubMed:32943521, PubMed:32943522, PubMed:33326748, PubMed:35650250, Ref.14).</text>
</comment>
<comment type="interaction">
    <interactant intactId="EBI-14892">
        <id>Q08096</id>
    </interactant>
    <interactant intactId="EBI-3683">
        <id>Q08965</id>
        <label>BMS1</label>
    </interactant>
    <organismsDiffer>false</organismsDiffer>
    <experiments>8</experiments>
</comment>
<comment type="subcellular location">
    <subcellularLocation>
        <location evidence="6">Nucleus</location>
        <location evidence="6">Nucleolus</location>
    </subcellularLocation>
</comment>
<comment type="miscellaneous">
    <text evidence="3">Present with 10000 molecules/cell in log phase SD medium.</text>
</comment>
<comment type="similarity">
    <text evidence="17">Belongs to the RNA 3'-terminal cyclase family. Type 2 subfamily.</text>
</comment>
<accession>Q08096</accession>
<accession>D6W257</accession>